<sequence>MPHSQKSRHCELEQGLQAPKEAQGLVGVQVAEAEKVNTTASSSPSTLIQGTLEKVSASGTPGTPQSSQRVCSPCTTIKATPWNQSDESSRSQEKKDPGASQALMLEKKVDELVKFLSVKYTTKQPITEAEMLKGVIKEHKDHFPPIFMQAHECMEIVFGTDMKEVDPISHSCVLLKSLDLTYDRRLSDDQGMPKTGLLILTFGVILMEANCASEEKIWEVLNIIRVYAGWKDFIYGEPRKLITRDLVQEKYLECCQVSNSDPPRYKFPWGPRAHAETTKMKVLEFFSRVSGSDASSFPLLYEEALRDEKEKAQAIIATMGGTTLMASAHSWAKSSSFSCPE</sequence>
<dbReference type="EMBL" id="Z81311">
    <property type="status" value="NOT_ANNOTATED_CDS"/>
    <property type="molecule type" value="Genomic_DNA"/>
</dbReference>
<dbReference type="EMBL" id="CH471150">
    <property type="protein sequence ID" value="EAW88445.1"/>
    <property type="molecule type" value="Genomic_DNA"/>
</dbReference>
<dbReference type="SMR" id="A6NCF6"/>
<dbReference type="FunCoup" id="A6NCF6">
    <property type="interactions" value="343"/>
</dbReference>
<dbReference type="IntAct" id="A6NCF6">
    <property type="interactions" value="1"/>
</dbReference>
<dbReference type="GlyGen" id="A6NCF6">
    <property type="glycosylation" value="1 site"/>
</dbReference>
<dbReference type="BioMuta" id="HGNC:35154"/>
<dbReference type="MassIVE" id="A6NCF6"/>
<dbReference type="PeptideAtlas" id="A6NCF6"/>
<dbReference type="ProteomicsDB" id="830"/>
<dbReference type="AGR" id="HGNC:35154"/>
<dbReference type="GeneCards" id="MAGEA13P"/>
<dbReference type="HGNC" id="HGNC:35154">
    <property type="gene designation" value="MAGEA13P"/>
</dbReference>
<dbReference type="neXtProt" id="NX_A6NCF6"/>
<dbReference type="InParanoid" id="A6NCF6"/>
<dbReference type="PAN-GO" id="A6NCF6">
    <property type="GO annotations" value="2 GO annotations based on evolutionary models"/>
</dbReference>
<dbReference type="PhylomeDB" id="A6NCF6"/>
<dbReference type="Pharos" id="A6NCF6">
    <property type="development level" value="Tdark"/>
</dbReference>
<dbReference type="Proteomes" id="UP000005640">
    <property type="component" value="Unplaced"/>
</dbReference>
<dbReference type="RNAct" id="A6NCF6">
    <property type="molecule type" value="protein"/>
</dbReference>
<dbReference type="GO" id="GO:0005634">
    <property type="term" value="C:nucleus"/>
    <property type="evidence" value="ECO:0000318"/>
    <property type="project" value="GO_Central"/>
</dbReference>
<dbReference type="GO" id="GO:0000122">
    <property type="term" value="P:negative regulation of transcription by RNA polymerase II"/>
    <property type="evidence" value="ECO:0000318"/>
    <property type="project" value="GO_Central"/>
</dbReference>
<dbReference type="FunFam" id="1.10.10.1200:FF:000007">
    <property type="entry name" value="Melanoma-associated antigen C2"/>
    <property type="match status" value="1"/>
</dbReference>
<dbReference type="FunFam" id="1.10.10.1210:FF:000001">
    <property type="entry name" value="melanoma-associated antigen D1"/>
    <property type="match status" value="1"/>
</dbReference>
<dbReference type="Gene3D" id="1.10.10.1200">
    <property type="entry name" value="MAGE homology domain, winged helix WH1 motif"/>
    <property type="match status" value="1"/>
</dbReference>
<dbReference type="Gene3D" id="1.10.10.1210">
    <property type="entry name" value="MAGE homology domain, winged helix WH2 motif"/>
    <property type="match status" value="1"/>
</dbReference>
<dbReference type="InterPro" id="IPR037445">
    <property type="entry name" value="MAGE"/>
</dbReference>
<dbReference type="InterPro" id="IPR021072">
    <property type="entry name" value="MAGE_N"/>
</dbReference>
<dbReference type="InterPro" id="IPR041898">
    <property type="entry name" value="MAGE_WH1"/>
</dbReference>
<dbReference type="InterPro" id="IPR041899">
    <property type="entry name" value="MAGE_WH2"/>
</dbReference>
<dbReference type="InterPro" id="IPR002190">
    <property type="entry name" value="MHD_dom"/>
</dbReference>
<dbReference type="PANTHER" id="PTHR11736:SF85">
    <property type="entry name" value="MAGE DOMAIN-CONTAINING PROTEIN MAGEA13P-RELATED"/>
    <property type="match status" value="1"/>
</dbReference>
<dbReference type="PANTHER" id="PTHR11736">
    <property type="entry name" value="MELANOMA-ASSOCIATED ANTIGEN MAGE ANTIGEN"/>
    <property type="match status" value="1"/>
</dbReference>
<dbReference type="Pfam" id="PF01454">
    <property type="entry name" value="MAGE"/>
    <property type="match status" value="1"/>
</dbReference>
<dbReference type="Pfam" id="PF12440">
    <property type="entry name" value="MAGE_N"/>
    <property type="match status" value="1"/>
</dbReference>
<dbReference type="SMART" id="SM01373">
    <property type="entry name" value="MAGE"/>
    <property type="match status" value="1"/>
</dbReference>
<dbReference type="SMART" id="SM01392">
    <property type="entry name" value="MAGE_N"/>
    <property type="match status" value="1"/>
</dbReference>
<dbReference type="PROSITE" id="PS50838">
    <property type="entry name" value="MAGE"/>
    <property type="match status" value="1"/>
</dbReference>
<reference key="1">
    <citation type="journal article" date="2005" name="Nature">
        <title>The DNA sequence of the human X chromosome.</title>
        <authorList>
            <person name="Ross M.T."/>
            <person name="Grafham D.V."/>
            <person name="Coffey A.J."/>
            <person name="Scherer S."/>
            <person name="McLay K."/>
            <person name="Muzny D."/>
            <person name="Platzer M."/>
            <person name="Howell G.R."/>
            <person name="Burrows C."/>
            <person name="Bird C.P."/>
            <person name="Frankish A."/>
            <person name="Lovell F.L."/>
            <person name="Howe K.L."/>
            <person name="Ashurst J.L."/>
            <person name="Fulton R.S."/>
            <person name="Sudbrak R."/>
            <person name="Wen G."/>
            <person name="Jones M.C."/>
            <person name="Hurles M.E."/>
            <person name="Andrews T.D."/>
            <person name="Scott C.E."/>
            <person name="Searle S."/>
            <person name="Ramser J."/>
            <person name="Whittaker A."/>
            <person name="Deadman R."/>
            <person name="Carter N.P."/>
            <person name="Hunt S.E."/>
            <person name="Chen R."/>
            <person name="Cree A."/>
            <person name="Gunaratne P."/>
            <person name="Havlak P."/>
            <person name="Hodgson A."/>
            <person name="Metzker M.L."/>
            <person name="Richards S."/>
            <person name="Scott G."/>
            <person name="Steffen D."/>
            <person name="Sodergren E."/>
            <person name="Wheeler D.A."/>
            <person name="Worley K.C."/>
            <person name="Ainscough R."/>
            <person name="Ambrose K.D."/>
            <person name="Ansari-Lari M.A."/>
            <person name="Aradhya S."/>
            <person name="Ashwell R.I."/>
            <person name="Babbage A.K."/>
            <person name="Bagguley C.L."/>
            <person name="Ballabio A."/>
            <person name="Banerjee R."/>
            <person name="Barker G.E."/>
            <person name="Barlow K.F."/>
            <person name="Barrett I.P."/>
            <person name="Bates K.N."/>
            <person name="Beare D.M."/>
            <person name="Beasley H."/>
            <person name="Beasley O."/>
            <person name="Beck A."/>
            <person name="Bethel G."/>
            <person name="Blechschmidt K."/>
            <person name="Brady N."/>
            <person name="Bray-Allen S."/>
            <person name="Bridgeman A.M."/>
            <person name="Brown A.J."/>
            <person name="Brown M.J."/>
            <person name="Bonnin D."/>
            <person name="Bruford E.A."/>
            <person name="Buhay C."/>
            <person name="Burch P."/>
            <person name="Burford D."/>
            <person name="Burgess J."/>
            <person name="Burrill W."/>
            <person name="Burton J."/>
            <person name="Bye J.M."/>
            <person name="Carder C."/>
            <person name="Carrel L."/>
            <person name="Chako J."/>
            <person name="Chapman J.C."/>
            <person name="Chavez D."/>
            <person name="Chen E."/>
            <person name="Chen G."/>
            <person name="Chen Y."/>
            <person name="Chen Z."/>
            <person name="Chinault C."/>
            <person name="Ciccodicola A."/>
            <person name="Clark S.Y."/>
            <person name="Clarke G."/>
            <person name="Clee C.M."/>
            <person name="Clegg S."/>
            <person name="Clerc-Blankenburg K."/>
            <person name="Clifford K."/>
            <person name="Cobley V."/>
            <person name="Cole C.G."/>
            <person name="Conquer J.S."/>
            <person name="Corby N."/>
            <person name="Connor R.E."/>
            <person name="David R."/>
            <person name="Davies J."/>
            <person name="Davis C."/>
            <person name="Davis J."/>
            <person name="Delgado O."/>
            <person name="Deshazo D."/>
            <person name="Dhami P."/>
            <person name="Ding Y."/>
            <person name="Dinh H."/>
            <person name="Dodsworth S."/>
            <person name="Draper H."/>
            <person name="Dugan-Rocha S."/>
            <person name="Dunham A."/>
            <person name="Dunn M."/>
            <person name="Durbin K.J."/>
            <person name="Dutta I."/>
            <person name="Eades T."/>
            <person name="Ellwood M."/>
            <person name="Emery-Cohen A."/>
            <person name="Errington H."/>
            <person name="Evans K.L."/>
            <person name="Faulkner L."/>
            <person name="Francis F."/>
            <person name="Frankland J."/>
            <person name="Fraser A.E."/>
            <person name="Galgoczy P."/>
            <person name="Gilbert J."/>
            <person name="Gill R."/>
            <person name="Gloeckner G."/>
            <person name="Gregory S.G."/>
            <person name="Gribble S."/>
            <person name="Griffiths C."/>
            <person name="Grocock R."/>
            <person name="Gu Y."/>
            <person name="Gwilliam R."/>
            <person name="Hamilton C."/>
            <person name="Hart E.A."/>
            <person name="Hawes A."/>
            <person name="Heath P.D."/>
            <person name="Heitmann K."/>
            <person name="Hennig S."/>
            <person name="Hernandez J."/>
            <person name="Hinzmann B."/>
            <person name="Ho S."/>
            <person name="Hoffs M."/>
            <person name="Howden P.J."/>
            <person name="Huckle E.J."/>
            <person name="Hume J."/>
            <person name="Hunt P.J."/>
            <person name="Hunt A.R."/>
            <person name="Isherwood J."/>
            <person name="Jacob L."/>
            <person name="Johnson D."/>
            <person name="Jones S."/>
            <person name="de Jong P.J."/>
            <person name="Joseph S.S."/>
            <person name="Keenan S."/>
            <person name="Kelly S."/>
            <person name="Kershaw J.K."/>
            <person name="Khan Z."/>
            <person name="Kioschis P."/>
            <person name="Klages S."/>
            <person name="Knights A.J."/>
            <person name="Kosiura A."/>
            <person name="Kovar-Smith C."/>
            <person name="Laird G.K."/>
            <person name="Langford C."/>
            <person name="Lawlor S."/>
            <person name="Leversha M."/>
            <person name="Lewis L."/>
            <person name="Liu W."/>
            <person name="Lloyd C."/>
            <person name="Lloyd D.M."/>
            <person name="Loulseged H."/>
            <person name="Loveland J.E."/>
            <person name="Lovell J.D."/>
            <person name="Lozado R."/>
            <person name="Lu J."/>
            <person name="Lyne R."/>
            <person name="Ma J."/>
            <person name="Maheshwari M."/>
            <person name="Matthews L.H."/>
            <person name="McDowall J."/>
            <person name="McLaren S."/>
            <person name="McMurray A."/>
            <person name="Meidl P."/>
            <person name="Meitinger T."/>
            <person name="Milne S."/>
            <person name="Miner G."/>
            <person name="Mistry S.L."/>
            <person name="Morgan M."/>
            <person name="Morris S."/>
            <person name="Mueller I."/>
            <person name="Mullikin J.C."/>
            <person name="Nguyen N."/>
            <person name="Nordsiek G."/>
            <person name="Nyakatura G."/>
            <person name="O'dell C.N."/>
            <person name="Okwuonu G."/>
            <person name="Palmer S."/>
            <person name="Pandian R."/>
            <person name="Parker D."/>
            <person name="Parrish J."/>
            <person name="Pasternak S."/>
            <person name="Patel D."/>
            <person name="Pearce A.V."/>
            <person name="Pearson D.M."/>
            <person name="Pelan S.E."/>
            <person name="Perez L."/>
            <person name="Porter K.M."/>
            <person name="Ramsey Y."/>
            <person name="Reichwald K."/>
            <person name="Rhodes S."/>
            <person name="Ridler K.A."/>
            <person name="Schlessinger D."/>
            <person name="Schueler M.G."/>
            <person name="Sehra H.K."/>
            <person name="Shaw-Smith C."/>
            <person name="Shen H."/>
            <person name="Sheridan E.M."/>
            <person name="Shownkeen R."/>
            <person name="Skuce C.D."/>
            <person name="Smith M.L."/>
            <person name="Sotheran E.C."/>
            <person name="Steingruber H.E."/>
            <person name="Steward C.A."/>
            <person name="Storey R."/>
            <person name="Swann R.M."/>
            <person name="Swarbreck D."/>
            <person name="Tabor P.E."/>
            <person name="Taudien S."/>
            <person name="Taylor T."/>
            <person name="Teague B."/>
            <person name="Thomas K."/>
            <person name="Thorpe A."/>
            <person name="Timms K."/>
            <person name="Tracey A."/>
            <person name="Trevanion S."/>
            <person name="Tromans A.C."/>
            <person name="d'Urso M."/>
            <person name="Verduzco D."/>
            <person name="Villasana D."/>
            <person name="Waldron L."/>
            <person name="Wall M."/>
            <person name="Wang Q."/>
            <person name="Warren J."/>
            <person name="Warry G.L."/>
            <person name="Wei X."/>
            <person name="West A."/>
            <person name="Whitehead S.L."/>
            <person name="Whiteley M.N."/>
            <person name="Wilkinson J.E."/>
            <person name="Willey D.L."/>
            <person name="Williams G."/>
            <person name="Williams L."/>
            <person name="Williamson A."/>
            <person name="Williamson H."/>
            <person name="Wilming L."/>
            <person name="Woodmansey R.L."/>
            <person name="Wray P.W."/>
            <person name="Yen J."/>
            <person name="Zhang J."/>
            <person name="Zhou J."/>
            <person name="Zoghbi H."/>
            <person name="Zorilla S."/>
            <person name="Buck D."/>
            <person name="Reinhardt R."/>
            <person name="Poustka A."/>
            <person name="Rosenthal A."/>
            <person name="Lehrach H."/>
            <person name="Meindl A."/>
            <person name="Minx P.J."/>
            <person name="Hillier L.W."/>
            <person name="Willard H.F."/>
            <person name="Wilson R.K."/>
            <person name="Waterston R.H."/>
            <person name="Rice C.M."/>
            <person name="Vaudin M."/>
            <person name="Coulson A."/>
            <person name="Nelson D.L."/>
            <person name="Weinstock G."/>
            <person name="Sulston J.E."/>
            <person name="Durbin R.M."/>
            <person name="Hubbard T."/>
            <person name="Gibbs R.A."/>
            <person name="Beck S."/>
            <person name="Rogers J."/>
            <person name="Bentley D.R."/>
        </authorList>
    </citation>
    <scope>NUCLEOTIDE SEQUENCE [LARGE SCALE GENOMIC DNA]</scope>
</reference>
<reference key="2">
    <citation type="submission" date="2005-09" db="EMBL/GenBank/DDBJ databases">
        <authorList>
            <person name="Mural R.J."/>
            <person name="Istrail S."/>
            <person name="Sutton G.G."/>
            <person name="Florea L."/>
            <person name="Halpern A.L."/>
            <person name="Mobarry C.M."/>
            <person name="Lippert R."/>
            <person name="Walenz B."/>
            <person name="Shatkay H."/>
            <person name="Dew I."/>
            <person name="Miller J.R."/>
            <person name="Flanigan M.J."/>
            <person name="Edwards N.J."/>
            <person name="Bolanos R."/>
            <person name="Fasulo D."/>
            <person name="Halldorsson B.V."/>
            <person name="Hannenhalli S."/>
            <person name="Turner R."/>
            <person name="Yooseph S."/>
            <person name="Lu F."/>
            <person name="Nusskern D.R."/>
            <person name="Shue B.C."/>
            <person name="Zheng X.H."/>
            <person name="Zhong F."/>
            <person name="Delcher A.L."/>
            <person name="Huson D.H."/>
            <person name="Kravitz S.A."/>
            <person name="Mouchard L."/>
            <person name="Reinert K."/>
            <person name="Remington K.A."/>
            <person name="Clark A.G."/>
            <person name="Waterman M.S."/>
            <person name="Eichler E.E."/>
            <person name="Adams M.D."/>
            <person name="Hunkapiller M.W."/>
            <person name="Myers E.W."/>
            <person name="Venter J.C."/>
        </authorList>
    </citation>
    <scope>NUCLEOTIDE SEQUENCE [LARGE SCALE GENOMIC DNA]</scope>
</reference>
<feature type="chain" id="PRO_0000329282" description="Putative MAGE domain-containing protein MAGEA13P">
    <location>
        <begin position="1"/>
        <end position="341"/>
    </location>
</feature>
<feature type="domain" description="MAGE" evidence="1">
    <location>
        <begin position="105"/>
        <end position="304"/>
    </location>
</feature>
<feature type="region of interest" description="Disordered" evidence="2">
    <location>
        <begin position="1"/>
        <end position="21"/>
    </location>
</feature>
<feature type="region of interest" description="Disordered" evidence="2">
    <location>
        <begin position="78"/>
        <end position="101"/>
    </location>
</feature>
<feature type="compositionally biased region" description="Basic and acidic residues" evidence="2">
    <location>
        <begin position="87"/>
        <end position="97"/>
    </location>
</feature>
<keyword id="KW-1185">Reference proteome</keyword>
<organism>
    <name type="scientific">Homo sapiens</name>
    <name type="common">Human</name>
    <dbReference type="NCBI Taxonomy" id="9606"/>
    <lineage>
        <taxon>Eukaryota</taxon>
        <taxon>Metazoa</taxon>
        <taxon>Chordata</taxon>
        <taxon>Craniata</taxon>
        <taxon>Vertebrata</taxon>
        <taxon>Euteleostomi</taxon>
        <taxon>Mammalia</taxon>
        <taxon>Eutheria</taxon>
        <taxon>Euarchontoglires</taxon>
        <taxon>Primates</taxon>
        <taxon>Haplorrhini</taxon>
        <taxon>Catarrhini</taxon>
        <taxon>Hominidae</taxon>
        <taxon>Homo</taxon>
    </lineage>
</organism>
<evidence type="ECO:0000255" key="1">
    <source>
        <dbReference type="PROSITE-ProRule" id="PRU00127"/>
    </source>
</evidence>
<evidence type="ECO:0000256" key="2">
    <source>
        <dbReference type="SAM" id="MobiDB-lite"/>
    </source>
</evidence>
<evidence type="ECO:0000305" key="3"/>
<comment type="caution">
    <text evidence="3">Could be the product of a pseudogene.</text>
</comment>
<proteinExistence type="uncertain"/>
<protein>
    <recommendedName>
        <fullName>Putative MAGE domain-containing protein MAGEA13P</fullName>
    </recommendedName>
</protein>
<accession>A6NCF6</accession>
<gene>
    <name type="primary">MAGEA13P</name>
</gene>
<name>MA13P_HUMAN</name>